<sequence>MSLPAGNAVGNWLLILTAIFGFLTLIWIPQASAECQTRSIYCYECDSWTDARCKDPFNYTALPRDQPPLMTCNGCCVKMVRHQRSRYEVVRRMCTSQLQINLFMVDHVCMMESSGNGHMCFCEEDMCNSSKNLYTKNGYQHLINIMIIWLIGILLNQLSNR</sequence>
<reference evidence="5" key="1">
    <citation type="journal article" date="2007" name="Nature">
        <title>Evolution of genes and genomes on the Drosophila phylogeny.</title>
        <authorList>
            <consortium name="Drosophila 12 genomes consortium"/>
        </authorList>
    </citation>
    <scope>NUCLEOTIDE SEQUENCE [LARGE SCALE GENOMIC DNA]</scope>
    <source>
        <strain evidence="5">Tucson 14030-0811.24</strain>
    </source>
</reference>
<name>QVR_DROWI</name>
<organism>
    <name type="scientific">Drosophila willistoni</name>
    <name type="common">Fruit fly</name>
    <dbReference type="NCBI Taxonomy" id="7260"/>
    <lineage>
        <taxon>Eukaryota</taxon>
        <taxon>Metazoa</taxon>
        <taxon>Ecdysozoa</taxon>
        <taxon>Arthropoda</taxon>
        <taxon>Hexapoda</taxon>
        <taxon>Insecta</taxon>
        <taxon>Pterygota</taxon>
        <taxon>Neoptera</taxon>
        <taxon>Endopterygota</taxon>
        <taxon>Diptera</taxon>
        <taxon>Brachycera</taxon>
        <taxon>Muscomorpha</taxon>
        <taxon>Ephydroidea</taxon>
        <taxon>Drosophilidae</taxon>
        <taxon>Drosophila</taxon>
        <taxon>Sophophora</taxon>
    </lineage>
</organism>
<protein>
    <recommendedName>
        <fullName evidence="1">UPAR/Ly6 domain-containing protein qvr</fullName>
    </recommendedName>
    <alternativeName>
        <fullName evidence="1">Protein quiver</fullName>
    </alternativeName>
    <alternativeName>
        <fullName evidence="1">Protein sleepless</fullName>
    </alternativeName>
</protein>
<accession>B4MQJ1</accession>
<feature type="signal peptide" evidence="2">
    <location>
        <begin position="1"/>
        <end position="33"/>
    </location>
</feature>
<feature type="chain" id="PRO_0000365474" description="UPAR/Ly6 domain-containing protein qvr" evidence="2">
    <location>
        <begin position="34"/>
        <end position="128"/>
    </location>
</feature>
<feature type="propeptide" id="PRO_0000365475" description="Removed in mature form" evidence="1">
    <location>
        <begin position="129"/>
        <end position="161"/>
    </location>
</feature>
<feature type="transmembrane region" description="Helical" evidence="2">
    <location>
        <begin position="138"/>
        <end position="158"/>
    </location>
</feature>
<feature type="region of interest" description="Loop 1; may be required for cell surface localization or be essential for protein folding" evidence="1">
    <location>
        <begin position="55"/>
        <end position="68"/>
    </location>
</feature>
<feature type="region of interest" description="Loop 2; required for interaction with Sh/shaker and nAChRalpha3/Nicotinic acetylcholine receptor alpha3" evidence="1">
    <location>
        <begin position="78"/>
        <end position="92"/>
    </location>
</feature>
<feature type="lipid moiety-binding region" description="GPI-anchor amidated asparagine" evidence="1">
    <location>
        <position position="128"/>
    </location>
</feature>
<feature type="glycosylation site" description="N-linked (GlcNAc...) asparagine" evidence="1 3">
    <location>
        <position position="58"/>
    </location>
</feature>
<feature type="disulfide bond" evidence="1">
    <location>
        <begin position="42"/>
        <end position="76"/>
    </location>
</feature>
<feature type="disulfide bond" evidence="1">
    <location>
        <begin position="45"/>
        <end position="53"/>
    </location>
</feature>
<feature type="disulfide bond" evidence="1">
    <location>
        <begin position="72"/>
        <end position="94"/>
    </location>
</feature>
<feature type="disulfide bond" evidence="1">
    <location>
        <begin position="109"/>
        <end position="120"/>
    </location>
</feature>
<feature type="disulfide bond" evidence="1">
    <location>
        <begin position="122"/>
        <end position="127"/>
    </location>
</feature>
<keyword id="KW-0090">Biological rhythms</keyword>
<keyword id="KW-1003">Cell membrane</keyword>
<keyword id="KW-1015">Disulfide bond</keyword>
<keyword id="KW-0325">Glycoprotein</keyword>
<keyword id="KW-0336">GPI-anchor</keyword>
<keyword id="KW-0449">Lipoprotein</keyword>
<keyword id="KW-0472">Membrane</keyword>
<keyword id="KW-1185">Reference proteome</keyword>
<keyword id="KW-0732">Signal</keyword>
<keyword id="KW-0812">Transmembrane</keyword>
<keyword id="KW-1133">Transmembrane helix</keyword>
<proteinExistence type="inferred from homology"/>
<dbReference type="EMBL" id="CH963849">
    <property type="protein sequence ID" value="EDW74380.1"/>
    <property type="status" value="ALT_SEQ"/>
    <property type="molecule type" value="Genomic_DNA"/>
</dbReference>
<dbReference type="STRING" id="7260.B4MQJ1"/>
<dbReference type="GlyCosmos" id="B4MQJ1">
    <property type="glycosylation" value="1 site, No reported glycans"/>
</dbReference>
<dbReference type="ChiTaRS" id="qvr">
    <property type="organism name" value="fly"/>
</dbReference>
<dbReference type="Proteomes" id="UP000007798">
    <property type="component" value="Unassembled WGS sequence"/>
</dbReference>
<dbReference type="GO" id="GO:0009897">
    <property type="term" value="C:external side of plasma membrane"/>
    <property type="evidence" value="ECO:0007669"/>
    <property type="project" value="EnsemblMetazoa"/>
</dbReference>
<dbReference type="GO" id="GO:0045121">
    <property type="term" value="C:membrane raft"/>
    <property type="evidence" value="ECO:0007669"/>
    <property type="project" value="UniProtKB-SubCell"/>
</dbReference>
<dbReference type="GO" id="GO:0005886">
    <property type="term" value="C:plasma membrane"/>
    <property type="evidence" value="ECO:0000250"/>
    <property type="project" value="UniProtKB"/>
</dbReference>
<dbReference type="GO" id="GO:0030550">
    <property type="term" value="F:acetylcholine receptor inhibitor activity"/>
    <property type="evidence" value="ECO:0007669"/>
    <property type="project" value="EnsemblMetazoa"/>
</dbReference>
<dbReference type="GO" id="GO:0034235">
    <property type="term" value="F:GPI anchor binding"/>
    <property type="evidence" value="ECO:0000250"/>
    <property type="project" value="UniProtKB"/>
</dbReference>
<dbReference type="GO" id="GO:0099104">
    <property type="term" value="F:potassium channel activator activity"/>
    <property type="evidence" value="ECO:0007669"/>
    <property type="project" value="EnsemblMetazoa"/>
</dbReference>
<dbReference type="GO" id="GO:0045837">
    <property type="term" value="P:negative regulation of membrane potential"/>
    <property type="evidence" value="ECO:0007669"/>
    <property type="project" value="EnsemblMetazoa"/>
</dbReference>
<dbReference type="GO" id="GO:0045938">
    <property type="term" value="P:positive regulation of circadian sleep/wake cycle, sleep"/>
    <property type="evidence" value="ECO:0007669"/>
    <property type="project" value="EnsemblMetazoa"/>
</dbReference>
<dbReference type="GO" id="GO:0045187">
    <property type="term" value="P:regulation of circadian sleep/wake cycle, sleep"/>
    <property type="evidence" value="ECO:0000250"/>
    <property type="project" value="UniProtKB"/>
</dbReference>
<dbReference type="GO" id="GO:0032222">
    <property type="term" value="P:regulation of synaptic transmission, cholinergic"/>
    <property type="evidence" value="ECO:0007669"/>
    <property type="project" value="EnsemblMetazoa"/>
</dbReference>
<dbReference type="GO" id="GO:0048511">
    <property type="term" value="P:rhythmic process"/>
    <property type="evidence" value="ECO:0007669"/>
    <property type="project" value="UniProtKB-KW"/>
</dbReference>
<dbReference type="GO" id="GO:0030431">
    <property type="term" value="P:sleep"/>
    <property type="evidence" value="ECO:0007669"/>
    <property type="project" value="EnsemblMetazoa"/>
</dbReference>
<dbReference type="CDD" id="cd23595">
    <property type="entry name" value="TFP_LU_ECD_Qvr"/>
    <property type="match status" value="1"/>
</dbReference>
<dbReference type="InterPro" id="IPR031424">
    <property type="entry name" value="QVR-like"/>
</dbReference>
<dbReference type="InterPro" id="IPR050975">
    <property type="entry name" value="Sleep_regulator"/>
</dbReference>
<dbReference type="PANTHER" id="PTHR33562">
    <property type="entry name" value="ATILLA, ISOFORM B-RELATED-RELATED"/>
    <property type="match status" value="1"/>
</dbReference>
<dbReference type="PANTHER" id="PTHR33562:SF31">
    <property type="entry name" value="PROTEIN QUIVER"/>
    <property type="match status" value="1"/>
</dbReference>
<dbReference type="Pfam" id="PF17064">
    <property type="entry name" value="QVR"/>
    <property type="match status" value="1"/>
</dbReference>
<gene>
    <name evidence="1" type="primary">qvr</name>
    <name evidence="1" type="synonym">sss</name>
    <name type="ORF">GK19387</name>
</gene>
<comment type="function">
    <text evidence="1">Bifunctional regulator of neuronal activity in the mushroom body, and possibly other regions of the brain, that acts as a signaling molecule required for homeostatic regulation of sleep under normal conditions and after sleep deprivation. Reduces neuronal excitability by enhancing Sh/shaker K(+) channel activity; possibly by stabilizing Sh/shaker to increase protein levels, accelerating its activation kinetics, slowing C-type inactivation and enhancing recovery from inactivation. Specifically affects the A-type K(+) current. Antagonizes nicotinic acetylcholine receptors (nAChRs) to reduce synaptic transmission, possibly by preventing their localization to the cell surface. Required for regulation of neuromuscular excitability and plasticity at neuromuscular junctions.</text>
</comment>
<comment type="subunit">
    <text evidence="1">Interacts (via loop 2 of the three-fingered Ly-6 domain) with Sh/shaker; this interaction may stabilize both components of the complex and may be required for targeting or retention of Sh/shaker to neural cell projections. Interacts (via loop 2 of the three-fingered Ly-6 domain) with nAChRalpha3 and potentially other nicotinic acetylcholine receptors; this interaction is required for antagonism of nicotinic acetylcholine receptors.</text>
</comment>
<comment type="subcellular location">
    <subcellularLocation>
        <location evidence="1">Cell membrane</location>
        <topology evidence="1">Lipid-anchor</topology>
        <topology evidence="1">GPI-anchor</topology>
        <orientation evidence="1">Extracellular side</orientation>
    </subcellularLocation>
    <subcellularLocation>
        <location evidence="1">Membrane raft</location>
        <topology evidence="1">Lipid-anchor</topology>
        <topology evidence="1">GPI-anchor</topology>
        <orientation evidence="1">Extracellular side</orientation>
    </subcellularLocation>
</comment>
<comment type="tissue specificity">
    <text evidence="1">Expressed in mushroom body (at protein level); overlaps with expression of Sh/shaker and nicotinic acetylcholine receptor (nAChR) components also involved in sleep regulation. Expressed in the adult brain and head. Enriched in the mushroom body, anterior optic tubercle, superior protocerebrum, antennal nerve and visual projection neuron fibers projecting into the lobula plate of the optic lobe.</text>
</comment>
<comment type="domain">
    <text evidence="1">Consists of a single Ly-6 domain, adopting a three finger fold stabilized by 5 disulfide bonds. The first loop contains a region essential for protein folding or that is required for localization to the cell surface. The second loop mediates protein-protein interactions.</text>
</comment>
<comment type="PTM">
    <text evidence="1">N-glycosylated probably on Asn-58.</text>
</comment>
<comment type="similarity">
    <text evidence="4">Belongs to the quiver family.</text>
</comment>
<comment type="sequence caution" evidence="4">
    <conflict type="erroneous gene model prediction">
        <sequence resource="EMBL-CDS" id="EDW74380"/>
    </conflict>
</comment>
<evidence type="ECO:0000250" key="1">
    <source>
        <dbReference type="UniProtKB" id="B5A5T4"/>
    </source>
</evidence>
<evidence type="ECO:0000255" key="2"/>
<evidence type="ECO:0000255" key="3">
    <source>
        <dbReference type="PROSITE-ProRule" id="PRU00498"/>
    </source>
</evidence>
<evidence type="ECO:0000305" key="4"/>
<evidence type="ECO:0000312" key="5">
    <source>
        <dbReference type="EMBL" id="EDW74380.1"/>
    </source>
</evidence>